<feature type="chain" id="PRO_0000069023" description="Muscarinic acetylcholine receptor M2">
    <location>
        <begin position="1" status="less than"/>
        <end position="440"/>
    </location>
</feature>
<feature type="transmembrane region" description="Helical; Name=1" evidence="1">
    <location>
        <begin position="1" status="less than"/>
        <end position="19"/>
    </location>
</feature>
<feature type="topological domain" description="Cytoplasmic" evidence="1">
    <location>
        <begin position="20"/>
        <end position="33"/>
    </location>
</feature>
<feature type="transmembrane region" description="Helical; Name=2" evidence="1">
    <location>
        <begin position="34"/>
        <end position="54"/>
    </location>
</feature>
<feature type="topological domain" description="Extracellular" evidence="1">
    <location>
        <begin position="55"/>
        <end position="71"/>
    </location>
</feature>
<feature type="transmembrane region" description="Helical; Name=3" evidence="1">
    <location>
        <begin position="72"/>
        <end position="93"/>
    </location>
</feature>
<feature type="topological domain" description="Cytoplasmic" evidence="1">
    <location>
        <begin position="94"/>
        <end position="113"/>
    </location>
</feature>
<feature type="transmembrane region" description="Helical; Name=4" evidence="1">
    <location>
        <begin position="114"/>
        <end position="136"/>
    </location>
</feature>
<feature type="topological domain" description="Extracellular" evidence="1">
    <location>
        <begin position="137"/>
        <end position="158"/>
    </location>
</feature>
<feature type="transmembrane region" description="Helical; Name=5" evidence="1">
    <location>
        <begin position="159"/>
        <end position="183"/>
    </location>
</feature>
<feature type="topological domain" description="Cytoplasmic" evidence="1">
    <location>
        <begin position="184"/>
        <end position="361"/>
    </location>
</feature>
<feature type="transmembrane region" description="Helical; Name=6" evidence="1">
    <location>
        <begin position="362"/>
        <end position="384"/>
    </location>
</feature>
<feature type="topological domain" description="Extracellular" evidence="1">
    <location>
        <begin position="385"/>
        <end position="392"/>
    </location>
</feature>
<feature type="transmembrane region" description="Helical; Name=7" evidence="1">
    <location>
        <begin position="393"/>
        <end position="416"/>
    </location>
</feature>
<feature type="topological domain" description="Cytoplasmic" evidence="1">
    <location>
        <begin position="417"/>
        <end position="440"/>
    </location>
</feature>
<feature type="region of interest" description="Disordered" evidence="5">
    <location>
        <begin position="192"/>
        <end position="329"/>
    </location>
</feature>
<feature type="short sequence motif" description="Important for signaling">
    <location>
        <begin position="94"/>
        <end position="96"/>
    </location>
</feature>
<feature type="short sequence motif" description="Important for signaling">
    <location>
        <begin position="410"/>
        <end position="414"/>
    </location>
</feature>
<feature type="compositionally biased region" description="Basic and acidic residues" evidence="5">
    <location>
        <begin position="228"/>
        <end position="244"/>
    </location>
</feature>
<feature type="compositionally biased region" description="Polar residues" evidence="5">
    <location>
        <begin position="258"/>
        <end position="267"/>
    </location>
</feature>
<feature type="compositionally biased region" description="Polar residues" evidence="5">
    <location>
        <begin position="278"/>
        <end position="287"/>
    </location>
</feature>
<feature type="compositionally biased region" description="Polar residues" evidence="5">
    <location>
        <begin position="308"/>
        <end position="327"/>
    </location>
</feature>
<feature type="modified residue" description="Phosphoserine" evidence="2">
    <location>
        <position position="206"/>
    </location>
</feature>
<feature type="modified residue" description="Phosphothreonine" evidence="3">
    <location>
        <position position="420"/>
    </location>
</feature>
<feature type="modified residue" description="Phosphothreonine" evidence="3">
    <location>
        <position position="424"/>
    </location>
</feature>
<feature type="modified residue" description="Phosphothreonine" evidence="3">
    <location>
        <position position="439"/>
    </location>
</feature>
<feature type="disulfide bond" evidence="4">
    <location>
        <begin position="70"/>
        <end position="150"/>
    </location>
</feature>
<feature type="disulfide bond" evidence="4">
    <location>
        <begin position="387"/>
        <end position="390"/>
    </location>
</feature>
<feature type="non-terminal residue">
    <location>
        <position position="1"/>
    </location>
</feature>
<gene>
    <name type="primary">CHRM2</name>
</gene>
<accession>Q9N2A7</accession>
<protein>
    <recommendedName>
        <fullName>Muscarinic acetylcholine receptor M2</fullName>
    </recommendedName>
</protein>
<name>ACM2_PANTR</name>
<comment type="function">
    <text evidence="1">The muscarinic acetylcholine receptor mediates various cellular responses, including inhibition of adenylate cyclase, breakdown of phosphoinositides and modulation of potassium channels through the action of G proteins. Primary transducing effect is adenylate cyclase inhibition. Signaling promotes phospholipase C activity, leading to the release of inositol trisphosphate (IP3); this then triggers calcium ion release into the cytosol (By similarity).</text>
</comment>
<comment type="subunit">
    <text evidence="1">Interacts with ARRB1 and ARRB2. Interacts with RACK1; the interaction regulates CHRM2 internalization (By similarity).</text>
</comment>
<comment type="subcellular location">
    <subcellularLocation>
        <location evidence="1">Cell membrane</location>
        <topology evidence="1">Multi-pass membrane protein</topology>
    </subcellularLocation>
    <subcellularLocation>
        <location evidence="1">Postsynaptic cell membrane</location>
        <topology evidence="1">Multi-pass membrane protein</topology>
    </subcellularLocation>
    <text evidence="1">Phosphorylation in response to agonist binding promotes receptor internalization.</text>
</comment>
<comment type="PTM">
    <text evidence="1">Phosphorylated in response to agonist treatment.</text>
</comment>
<comment type="similarity">
    <text evidence="4">Belongs to the G-protein coupled receptor 1 family. Muscarinic acetylcholine receptor subfamily. CHRM2 sub-subfamily.</text>
</comment>
<organism>
    <name type="scientific">Pan troglodytes</name>
    <name type="common">Chimpanzee</name>
    <dbReference type="NCBI Taxonomy" id="9598"/>
    <lineage>
        <taxon>Eukaryota</taxon>
        <taxon>Metazoa</taxon>
        <taxon>Chordata</taxon>
        <taxon>Craniata</taxon>
        <taxon>Vertebrata</taxon>
        <taxon>Euteleostomi</taxon>
        <taxon>Mammalia</taxon>
        <taxon>Eutheria</taxon>
        <taxon>Euarchontoglires</taxon>
        <taxon>Primates</taxon>
        <taxon>Haplorrhini</taxon>
        <taxon>Catarrhini</taxon>
        <taxon>Hominidae</taxon>
        <taxon>Pan</taxon>
    </lineage>
</organism>
<keyword id="KW-1003">Cell membrane</keyword>
<keyword id="KW-1015">Disulfide bond</keyword>
<keyword id="KW-0297">G-protein coupled receptor</keyword>
<keyword id="KW-0472">Membrane</keyword>
<keyword id="KW-0597">Phosphoprotein</keyword>
<keyword id="KW-0628">Postsynaptic cell membrane</keyword>
<keyword id="KW-0675">Receptor</keyword>
<keyword id="KW-1185">Reference proteome</keyword>
<keyword id="KW-0770">Synapse</keyword>
<keyword id="KW-0807">Transducer</keyword>
<keyword id="KW-0812">Transmembrane</keyword>
<keyword id="KW-1133">Transmembrane helix</keyword>
<dbReference type="EMBL" id="AB041392">
    <property type="protein sequence ID" value="BAA94477.1"/>
    <property type="molecule type" value="Genomic_DNA"/>
</dbReference>
<dbReference type="SMR" id="Q9N2A7"/>
<dbReference type="STRING" id="9598.ENSPTRP00000086632"/>
<dbReference type="PaxDb" id="9598-ENSPTRP00000054285"/>
<dbReference type="eggNOG" id="KOG4220">
    <property type="taxonomic scope" value="Eukaryota"/>
</dbReference>
<dbReference type="InParanoid" id="Q9N2A7"/>
<dbReference type="Proteomes" id="UP000002277">
    <property type="component" value="Unplaced"/>
</dbReference>
<dbReference type="GO" id="GO:0030425">
    <property type="term" value="C:dendrite"/>
    <property type="evidence" value="ECO:0000318"/>
    <property type="project" value="GO_Central"/>
</dbReference>
<dbReference type="GO" id="GO:0005886">
    <property type="term" value="C:plasma membrane"/>
    <property type="evidence" value="ECO:0000250"/>
    <property type="project" value="UniProtKB"/>
</dbReference>
<dbReference type="GO" id="GO:0045211">
    <property type="term" value="C:postsynaptic membrane"/>
    <property type="evidence" value="ECO:0007669"/>
    <property type="project" value="UniProtKB-SubCell"/>
</dbReference>
<dbReference type="GO" id="GO:0045202">
    <property type="term" value="C:synapse"/>
    <property type="evidence" value="ECO:0000318"/>
    <property type="project" value="GO_Central"/>
</dbReference>
<dbReference type="GO" id="GO:0016907">
    <property type="term" value="F:G protein-coupled acetylcholine receptor activity"/>
    <property type="evidence" value="ECO:0000250"/>
    <property type="project" value="UniProtKB"/>
</dbReference>
<dbReference type="GO" id="GO:0007197">
    <property type="term" value="P:adenylate cyclase-inhibiting G protein-coupled acetylcholine receptor signaling pathway"/>
    <property type="evidence" value="ECO:0000318"/>
    <property type="project" value="GO_Central"/>
</dbReference>
<dbReference type="GO" id="GO:0007268">
    <property type="term" value="P:chemical synaptic transmission"/>
    <property type="evidence" value="ECO:0000318"/>
    <property type="project" value="GO_Central"/>
</dbReference>
<dbReference type="GO" id="GO:0007213">
    <property type="term" value="P:G protein-coupled acetylcholine receptor signaling pathway"/>
    <property type="evidence" value="ECO:0000250"/>
    <property type="project" value="UniProtKB"/>
</dbReference>
<dbReference type="GO" id="GO:0007187">
    <property type="term" value="P:G protein-coupled receptor signaling pathway, coupled to cyclic nucleotide second messenger"/>
    <property type="evidence" value="ECO:0000318"/>
    <property type="project" value="GO_Central"/>
</dbReference>
<dbReference type="GO" id="GO:0008016">
    <property type="term" value="P:regulation of heart contraction"/>
    <property type="evidence" value="ECO:0007669"/>
    <property type="project" value="InterPro"/>
</dbReference>
<dbReference type="GO" id="GO:0006940">
    <property type="term" value="P:regulation of smooth muscle contraction"/>
    <property type="evidence" value="ECO:0000318"/>
    <property type="project" value="GO_Central"/>
</dbReference>
<dbReference type="CDD" id="cd15297">
    <property type="entry name" value="7tmA_mAChR_M2"/>
    <property type="match status" value="1"/>
</dbReference>
<dbReference type="FunFam" id="1.20.1070.10:FF:000038">
    <property type="entry name" value="Muscarinic acetylcholine receptor"/>
    <property type="match status" value="1"/>
</dbReference>
<dbReference type="FunFam" id="1.20.1070.10:FF:000041">
    <property type="entry name" value="Muscarinic acetylcholine receptor"/>
    <property type="match status" value="1"/>
</dbReference>
<dbReference type="Gene3D" id="1.20.1070.10">
    <property type="entry name" value="Rhodopsin 7-helix transmembrane proteins"/>
    <property type="match status" value="2"/>
</dbReference>
<dbReference type="InterPro" id="IPR000276">
    <property type="entry name" value="GPCR_Rhodpsn"/>
</dbReference>
<dbReference type="InterPro" id="IPR017452">
    <property type="entry name" value="GPCR_Rhodpsn_7TM"/>
</dbReference>
<dbReference type="InterPro" id="IPR001065">
    <property type="entry name" value="Musac_Ach_M2_rcpt"/>
</dbReference>
<dbReference type="InterPro" id="IPR000995">
    <property type="entry name" value="Musac_Ach_rcpt"/>
</dbReference>
<dbReference type="PANTHER" id="PTHR24247">
    <property type="entry name" value="5-HYDROXYTRYPTAMINE RECEPTOR"/>
    <property type="match status" value="1"/>
</dbReference>
<dbReference type="PANTHER" id="PTHR24247:SF207">
    <property type="entry name" value="MUSCARINIC ACETYLCHOLINE RECEPTOR M2"/>
    <property type="match status" value="1"/>
</dbReference>
<dbReference type="Pfam" id="PF00001">
    <property type="entry name" value="7tm_1"/>
    <property type="match status" value="1"/>
</dbReference>
<dbReference type="PRINTS" id="PR00237">
    <property type="entry name" value="GPCRRHODOPSN"/>
</dbReference>
<dbReference type="PRINTS" id="PR00243">
    <property type="entry name" value="MUSCARINICR"/>
</dbReference>
<dbReference type="PRINTS" id="PR00539">
    <property type="entry name" value="MUSCRINICM2R"/>
</dbReference>
<dbReference type="SMART" id="SM01381">
    <property type="entry name" value="7TM_GPCR_Srsx"/>
    <property type="match status" value="1"/>
</dbReference>
<dbReference type="SUPFAM" id="SSF81321">
    <property type="entry name" value="Family A G protein-coupled receptor-like"/>
    <property type="match status" value="1"/>
</dbReference>
<dbReference type="PROSITE" id="PS00237">
    <property type="entry name" value="G_PROTEIN_RECEP_F1_1"/>
    <property type="match status" value="1"/>
</dbReference>
<dbReference type="PROSITE" id="PS50262">
    <property type="entry name" value="G_PROTEIN_RECEP_F1_2"/>
    <property type="match status" value="1"/>
</dbReference>
<sequence>VLVAGSLSLVTIIGNILVMVSIKVNRHLQTVNNYFLFSLACADLIIGVFSMNLYTLYTVIGYWPLGPVVCDLWLALDYVVSNASVMNLLIISFDRYFCVTKPLTYPVKRTTKMAGMMIAAAWVLSFILWAPAILFWQFIVGVRTVEDGECYIQFFSNAAVTFGTAIAAFYLPVIIMTVLYWHISRASKSRIKKDKKEPVANQDPVSPSLVQGRIVKPNNNNMPSSDDGLEHNKIQNGKAPRDPVTENCVQGEEKESSNDSTSVSAVASNMRDDEITQDENTVSTSLGHSKDENSKQTCIRIGTKTPKSDSCTPTNTTVEVVGSSGQNGDEKQNIVARKIVKMTKQPAKKKPPPSREKKVTRTILAILLAFIITWAPYNVMVLINTFCAPCIPNTVWTIGYWLCYINSTINPACYALCNATFKKTFKHLLMCHYKNIGATR</sequence>
<evidence type="ECO:0000250" key="1"/>
<evidence type="ECO:0000250" key="2">
    <source>
        <dbReference type="UniProtKB" id="Q9ERZ4"/>
    </source>
</evidence>
<evidence type="ECO:0000255" key="3"/>
<evidence type="ECO:0000255" key="4">
    <source>
        <dbReference type="PROSITE-ProRule" id="PRU00521"/>
    </source>
</evidence>
<evidence type="ECO:0000256" key="5">
    <source>
        <dbReference type="SAM" id="MobiDB-lite"/>
    </source>
</evidence>
<proteinExistence type="inferred from homology"/>
<reference key="1">
    <citation type="journal article" date="2004" name="Mol. Biol. Evol.">
        <title>Human-specific amino acid changes found in 103 protein-coding genes.</title>
        <authorList>
            <person name="Kitano T."/>
            <person name="Liu Y.-H."/>
            <person name="Ueda S."/>
            <person name="Saitou N."/>
        </authorList>
    </citation>
    <scope>NUCLEOTIDE SEQUENCE [GENOMIC DNA]</scope>
    <source>
        <strain>Isolate 220</strain>
    </source>
</reference>